<accession>A8AJG7</accession>
<feature type="chain" id="PRO_1000061772" description="Ribosomal RNA large subunit methyltransferase H">
    <location>
        <begin position="1"/>
        <end position="155"/>
    </location>
</feature>
<feature type="binding site" evidence="1">
    <location>
        <position position="72"/>
    </location>
    <ligand>
        <name>S-adenosyl-L-methionine</name>
        <dbReference type="ChEBI" id="CHEBI:59789"/>
    </ligand>
</feature>
<feature type="binding site" evidence="1">
    <location>
        <position position="103"/>
    </location>
    <ligand>
        <name>S-adenosyl-L-methionine</name>
        <dbReference type="ChEBI" id="CHEBI:59789"/>
    </ligand>
</feature>
<feature type="binding site" evidence="1">
    <location>
        <begin position="122"/>
        <end position="127"/>
    </location>
    <ligand>
        <name>S-adenosyl-L-methionine</name>
        <dbReference type="ChEBI" id="CHEBI:59789"/>
    </ligand>
</feature>
<evidence type="ECO:0000255" key="1">
    <source>
        <dbReference type="HAMAP-Rule" id="MF_00658"/>
    </source>
</evidence>
<reference key="1">
    <citation type="submission" date="2007-08" db="EMBL/GenBank/DDBJ databases">
        <authorList>
            <consortium name="The Citrobacter koseri Genome Sequencing Project"/>
            <person name="McClelland M."/>
            <person name="Sanderson E.K."/>
            <person name="Porwollik S."/>
            <person name="Spieth J."/>
            <person name="Clifton W.S."/>
            <person name="Latreille P."/>
            <person name="Courtney L."/>
            <person name="Wang C."/>
            <person name="Pepin K."/>
            <person name="Bhonagiri V."/>
            <person name="Nash W."/>
            <person name="Johnson M."/>
            <person name="Thiruvilangam P."/>
            <person name="Wilson R."/>
        </authorList>
    </citation>
    <scope>NUCLEOTIDE SEQUENCE [LARGE SCALE GENOMIC DNA]</scope>
    <source>
        <strain>ATCC BAA-895 / CDC 4225-83 / SGSC4696</strain>
    </source>
</reference>
<gene>
    <name evidence="1" type="primary">rlmH</name>
    <name type="ordered locus">CKO_02521</name>
</gene>
<keyword id="KW-0963">Cytoplasm</keyword>
<keyword id="KW-0489">Methyltransferase</keyword>
<keyword id="KW-1185">Reference proteome</keyword>
<keyword id="KW-0698">rRNA processing</keyword>
<keyword id="KW-0949">S-adenosyl-L-methionine</keyword>
<keyword id="KW-0808">Transferase</keyword>
<comment type="function">
    <text evidence="1">Specifically methylates the pseudouridine at position 1915 (m3Psi1915) in 23S rRNA.</text>
</comment>
<comment type="catalytic activity">
    <reaction evidence="1">
        <text>pseudouridine(1915) in 23S rRNA + S-adenosyl-L-methionine = N(3)-methylpseudouridine(1915) in 23S rRNA + S-adenosyl-L-homocysteine + H(+)</text>
        <dbReference type="Rhea" id="RHEA:42752"/>
        <dbReference type="Rhea" id="RHEA-COMP:10221"/>
        <dbReference type="Rhea" id="RHEA-COMP:10222"/>
        <dbReference type="ChEBI" id="CHEBI:15378"/>
        <dbReference type="ChEBI" id="CHEBI:57856"/>
        <dbReference type="ChEBI" id="CHEBI:59789"/>
        <dbReference type="ChEBI" id="CHEBI:65314"/>
        <dbReference type="ChEBI" id="CHEBI:74486"/>
        <dbReference type="EC" id="2.1.1.177"/>
    </reaction>
</comment>
<comment type="subunit">
    <text evidence="1">Homodimer.</text>
</comment>
<comment type="subcellular location">
    <subcellularLocation>
        <location evidence="1">Cytoplasm</location>
    </subcellularLocation>
</comment>
<comment type="similarity">
    <text evidence="1">Belongs to the RNA methyltransferase RlmH family.</text>
</comment>
<proteinExistence type="inferred from homology"/>
<organism>
    <name type="scientific">Citrobacter koseri (strain ATCC BAA-895 / CDC 4225-83 / SGSC4696)</name>
    <dbReference type="NCBI Taxonomy" id="290338"/>
    <lineage>
        <taxon>Bacteria</taxon>
        <taxon>Pseudomonadati</taxon>
        <taxon>Pseudomonadota</taxon>
        <taxon>Gammaproteobacteria</taxon>
        <taxon>Enterobacterales</taxon>
        <taxon>Enterobacteriaceae</taxon>
        <taxon>Citrobacter</taxon>
    </lineage>
</organism>
<name>RLMH_CITK8</name>
<protein>
    <recommendedName>
        <fullName evidence="1">Ribosomal RNA large subunit methyltransferase H</fullName>
        <ecNumber evidence="1">2.1.1.177</ecNumber>
    </recommendedName>
    <alternativeName>
        <fullName evidence="1">23S rRNA (pseudouridine1915-N3)-methyltransferase</fullName>
    </alternativeName>
    <alternativeName>
        <fullName evidence="1">23S rRNA m3Psi1915 methyltransferase</fullName>
    </alternativeName>
    <alternativeName>
        <fullName evidence="1">rRNA (pseudouridine-N3-)-methyltransferase RlmH</fullName>
    </alternativeName>
</protein>
<dbReference type="EC" id="2.1.1.177" evidence="1"/>
<dbReference type="EMBL" id="CP000822">
    <property type="protein sequence ID" value="ABV13630.1"/>
    <property type="molecule type" value="Genomic_DNA"/>
</dbReference>
<dbReference type="RefSeq" id="WP_003022725.1">
    <property type="nucleotide sequence ID" value="NC_009792.1"/>
</dbReference>
<dbReference type="BMRB" id="A8AJG7"/>
<dbReference type="SMR" id="A8AJG7"/>
<dbReference type="STRING" id="290338.CKO_02521"/>
<dbReference type="GeneID" id="93032228"/>
<dbReference type="KEGG" id="cko:CKO_02521"/>
<dbReference type="HOGENOM" id="CLU_100552_1_0_6"/>
<dbReference type="OrthoDB" id="9806643at2"/>
<dbReference type="Proteomes" id="UP000008148">
    <property type="component" value="Chromosome"/>
</dbReference>
<dbReference type="GO" id="GO:0005737">
    <property type="term" value="C:cytoplasm"/>
    <property type="evidence" value="ECO:0007669"/>
    <property type="project" value="UniProtKB-SubCell"/>
</dbReference>
<dbReference type="GO" id="GO:0070038">
    <property type="term" value="F:rRNA (pseudouridine-N3-)-methyltransferase activity"/>
    <property type="evidence" value="ECO:0007669"/>
    <property type="project" value="UniProtKB-UniRule"/>
</dbReference>
<dbReference type="CDD" id="cd18081">
    <property type="entry name" value="RlmH-like"/>
    <property type="match status" value="1"/>
</dbReference>
<dbReference type="FunFam" id="3.40.1280.10:FF:000004">
    <property type="entry name" value="Ribosomal RNA large subunit methyltransferase H"/>
    <property type="match status" value="1"/>
</dbReference>
<dbReference type="Gene3D" id="3.40.1280.10">
    <property type="match status" value="1"/>
</dbReference>
<dbReference type="HAMAP" id="MF_00658">
    <property type="entry name" value="23SrRNA_methyltr_H"/>
    <property type="match status" value="1"/>
</dbReference>
<dbReference type="InterPro" id="IPR029028">
    <property type="entry name" value="Alpha/beta_knot_MTases"/>
</dbReference>
<dbReference type="InterPro" id="IPR003742">
    <property type="entry name" value="RlmH-like"/>
</dbReference>
<dbReference type="InterPro" id="IPR029026">
    <property type="entry name" value="tRNA_m1G_MTases_N"/>
</dbReference>
<dbReference type="NCBIfam" id="NF000984">
    <property type="entry name" value="PRK00103.1-1"/>
    <property type="match status" value="1"/>
</dbReference>
<dbReference type="NCBIfam" id="NF000986">
    <property type="entry name" value="PRK00103.1-4"/>
    <property type="match status" value="1"/>
</dbReference>
<dbReference type="NCBIfam" id="TIGR00246">
    <property type="entry name" value="tRNA_RlmH_YbeA"/>
    <property type="match status" value="1"/>
</dbReference>
<dbReference type="PANTHER" id="PTHR33603">
    <property type="entry name" value="METHYLTRANSFERASE"/>
    <property type="match status" value="1"/>
</dbReference>
<dbReference type="PANTHER" id="PTHR33603:SF1">
    <property type="entry name" value="RIBOSOMAL RNA LARGE SUBUNIT METHYLTRANSFERASE H"/>
    <property type="match status" value="1"/>
</dbReference>
<dbReference type="Pfam" id="PF02590">
    <property type="entry name" value="SPOUT_MTase"/>
    <property type="match status" value="1"/>
</dbReference>
<dbReference type="PIRSF" id="PIRSF004505">
    <property type="entry name" value="MT_bac"/>
    <property type="match status" value="1"/>
</dbReference>
<dbReference type="SUPFAM" id="SSF75217">
    <property type="entry name" value="alpha/beta knot"/>
    <property type="match status" value="1"/>
</dbReference>
<sequence>MKLQLVAVGTKMPDWVQTGFTEYLRRFPKDMPFELIEIPAGKRGKNADIKRILDKEGEQMLAAAGKNRIVTLDIPGKPWDTPQLATELERWKLDGRDVSLLIGGPEGLSPACKAAAEQSWSLSALTLPHPLVRVLVAESLYRAWSITTNHPYHRE</sequence>